<accession>B5F9P6</accession>
<proteinExistence type="inferred from homology"/>
<dbReference type="EC" id="5.3.3.2" evidence="1"/>
<dbReference type="EMBL" id="CP001139">
    <property type="protein sequence ID" value="ACH65889.1"/>
    <property type="molecule type" value="Genomic_DNA"/>
</dbReference>
<dbReference type="RefSeq" id="WP_012533348.1">
    <property type="nucleotide sequence ID" value="NC_011184.1"/>
</dbReference>
<dbReference type="SMR" id="B5F9P6"/>
<dbReference type="KEGG" id="vfm:VFMJ11_0393"/>
<dbReference type="HOGENOM" id="CLU_060552_2_1_6"/>
<dbReference type="UniPathway" id="UPA00059">
    <property type="reaction ID" value="UER00104"/>
</dbReference>
<dbReference type="Proteomes" id="UP000001857">
    <property type="component" value="Chromosome I"/>
</dbReference>
<dbReference type="GO" id="GO:0005737">
    <property type="term" value="C:cytoplasm"/>
    <property type="evidence" value="ECO:0007669"/>
    <property type="project" value="UniProtKB-SubCell"/>
</dbReference>
<dbReference type="GO" id="GO:0004452">
    <property type="term" value="F:isopentenyl-diphosphate delta-isomerase activity"/>
    <property type="evidence" value="ECO:0007669"/>
    <property type="project" value="UniProtKB-UniRule"/>
</dbReference>
<dbReference type="GO" id="GO:0046872">
    <property type="term" value="F:metal ion binding"/>
    <property type="evidence" value="ECO:0007669"/>
    <property type="project" value="UniProtKB-KW"/>
</dbReference>
<dbReference type="GO" id="GO:0050992">
    <property type="term" value="P:dimethylallyl diphosphate biosynthetic process"/>
    <property type="evidence" value="ECO:0007669"/>
    <property type="project" value="UniProtKB-UniRule"/>
</dbReference>
<dbReference type="GO" id="GO:0009240">
    <property type="term" value="P:isopentenyl diphosphate biosynthetic process"/>
    <property type="evidence" value="ECO:0007669"/>
    <property type="project" value="TreeGrafter"/>
</dbReference>
<dbReference type="CDD" id="cd02885">
    <property type="entry name" value="NUDIX_IPP_Isomerase"/>
    <property type="match status" value="1"/>
</dbReference>
<dbReference type="Gene3D" id="3.90.79.10">
    <property type="entry name" value="Nucleoside Triphosphate Pyrophosphohydrolase"/>
    <property type="match status" value="1"/>
</dbReference>
<dbReference type="HAMAP" id="MF_00202">
    <property type="entry name" value="Idi"/>
    <property type="match status" value="1"/>
</dbReference>
<dbReference type="InterPro" id="IPR056375">
    <property type="entry name" value="Idi_bact"/>
</dbReference>
<dbReference type="InterPro" id="IPR011876">
    <property type="entry name" value="IsopentenylPP_isomerase_typ1"/>
</dbReference>
<dbReference type="InterPro" id="IPR015797">
    <property type="entry name" value="NUDIX_hydrolase-like_dom_sf"/>
</dbReference>
<dbReference type="InterPro" id="IPR000086">
    <property type="entry name" value="NUDIX_hydrolase_dom"/>
</dbReference>
<dbReference type="NCBIfam" id="NF002995">
    <property type="entry name" value="PRK03759.1"/>
    <property type="match status" value="1"/>
</dbReference>
<dbReference type="PANTHER" id="PTHR10885">
    <property type="entry name" value="ISOPENTENYL-DIPHOSPHATE DELTA-ISOMERASE"/>
    <property type="match status" value="1"/>
</dbReference>
<dbReference type="PANTHER" id="PTHR10885:SF0">
    <property type="entry name" value="ISOPENTENYL-DIPHOSPHATE DELTA-ISOMERASE"/>
    <property type="match status" value="1"/>
</dbReference>
<dbReference type="Pfam" id="PF00293">
    <property type="entry name" value="NUDIX"/>
    <property type="match status" value="1"/>
</dbReference>
<dbReference type="PIRSF" id="PIRSF018427">
    <property type="entry name" value="Isopntndiph_ism"/>
    <property type="match status" value="1"/>
</dbReference>
<dbReference type="SUPFAM" id="SSF55811">
    <property type="entry name" value="Nudix"/>
    <property type="match status" value="1"/>
</dbReference>
<dbReference type="PROSITE" id="PS51462">
    <property type="entry name" value="NUDIX"/>
    <property type="match status" value="1"/>
</dbReference>
<protein>
    <recommendedName>
        <fullName evidence="1">Isopentenyl-diphosphate Delta-isomerase</fullName>
        <shortName evidence="1">IPP isomerase</shortName>
        <ecNumber evidence="1">5.3.3.2</ecNumber>
    </recommendedName>
    <alternativeName>
        <fullName evidence="1">IPP:DMAPP isomerase</fullName>
    </alternativeName>
    <alternativeName>
        <fullName evidence="1">Isopentenyl pyrophosphate isomerase</fullName>
    </alternativeName>
</protein>
<reference key="1">
    <citation type="submission" date="2008-08" db="EMBL/GenBank/DDBJ databases">
        <title>Complete sequence of Vibrio fischeri strain MJ11.</title>
        <authorList>
            <person name="Mandel M.J."/>
            <person name="Stabb E.V."/>
            <person name="Ruby E.G."/>
            <person name="Ferriera S."/>
            <person name="Johnson J."/>
            <person name="Kravitz S."/>
            <person name="Beeson K."/>
            <person name="Sutton G."/>
            <person name="Rogers Y.-H."/>
            <person name="Friedman R."/>
            <person name="Frazier M."/>
            <person name="Venter J.C."/>
        </authorList>
    </citation>
    <scope>NUCLEOTIDE SEQUENCE [LARGE SCALE GENOMIC DNA]</scope>
    <source>
        <strain>MJ11</strain>
    </source>
</reference>
<organism>
    <name type="scientific">Aliivibrio fischeri (strain MJ11)</name>
    <name type="common">Vibrio fischeri</name>
    <dbReference type="NCBI Taxonomy" id="388396"/>
    <lineage>
        <taxon>Bacteria</taxon>
        <taxon>Pseudomonadati</taxon>
        <taxon>Pseudomonadota</taxon>
        <taxon>Gammaproteobacteria</taxon>
        <taxon>Vibrionales</taxon>
        <taxon>Vibrionaceae</taxon>
        <taxon>Aliivibrio</taxon>
    </lineage>
</organism>
<sequence>MTEYVVLVNEQGDAIGTMEKLEAHEKGLLHLAFSVLLYRETDLGKEFLLQKRAECKYHSKNKWSNTCCSHPRVNENVEAAGTRRLNEEIGITGVLPEQFVNLGWFIYQAELENGLSEHEQDYILIANTPDVSFILNPEEVSDIQWWSEADIEKELKANPDTFSVWFPTVYKKVLTHLHQAN</sequence>
<comment type="function">
    <text evidence="1">Catalyzes the 1,3-allylic rearrangement of the homoallylic substrate isopentenyl (IPP) to its highly electrophilic allylic isomer, dimethylallyl diphosphate (DMAPP).</text>
</comment>
<comment type="catalytic activity">
    <reaction evidence="1">
        <text>isopentenyl diphosphate = dimethylallyl diphosphate</text>
        <dbReference type="Rhea" id="RHEA:23284"/>
        <dbReference type="ChEBI" id="CHEBI:57623"/>
        <dbReference type="ChEBI" id="CHEBI:128769"/>
        <dbReference type="EC" id="5.3.3.2"/>
    </reaction>
</comment>
<comment type="cofactor">
    <cofactor evidence="1">
        <name>Mg(2+)</name>
        <dbReference type="ChEBI" id="CHEBI:18420"/>
    </cofactor>
    <text evidence="1">Binds 1 Mg(2+) ion per subunit. The magnesium ion binds only when substrate is bound.</text>
</comment>
<comment type="cofactor">
    <cofactor evidence="1">
        <name>Mn(2+)</name>
        <dbReference type="ChEBI" id="CHEBI:29035"/>
    </cofactor>
    <text evidence="1">Binds 1 Mn(2+) ion per subunit.</text>
</comment>
<comment type="pathway">
    <text evidence="1">Isoprenoid biosynthesis; dimethylallyl diphosphate biosynthesis; dimethylallyl diphosphate from isopentenyl diphosphate: step 1/1.</text>
</comment>
<comment type="subcellular location">
    <subcellularLocation>
        <location evidence="1">Cytoplasm</location>
    </subcellularLocation>
</comment>
<comment type="similarity">
    <text evidence="1">Belongs to the IPP isomerase type 1 family.</text>
</comment>
<gene>
    <name evidence="1" type="primary">idi</name>
    <name type="ordered locus">VFMJ11_0393</name>
</gene>
<name>IDI_ALIFM</name>
<evidence type="ECO:0000255" key="1">
    <source>
        <dbReference type="HAMAP-Rule" id="MF_00202"/>
    </source>
</evidence>
<feature type="chain" id="PRO_1000099450" description="Isopentenyl-diphosphate Delta-isomerase">
    <location>
        <begin position="1"/>
        <end position="181"/>
    </location>
</feature>
<feature type="domain" description="Nudix hydrolase">
    <location>
        <begin position="28"/>
        <end position="168"/>
    </location>
</feature>
<feature type="active site" evidence="1">
    <location>
        <position position="68"/>
    </location>
</feature>
<feature type="active site" evidence="1">
    <location>
        <position position="119"/>
    </location>
</feature>
<feature type="binding site" evidence="1">
    <location>
        <position position="24"/>
    </location>
    <ligand>
        <name>Mn(2+)</name>
        <dbReference type="ChEBI" id="CHEBI:29035"/>
    </ligand>
</feature>
<feature type="binding site" evidence="1">
    <location>
        <position position="30"/>
    </location>
    <ligand>
        <name>Mn(2+)</name>
        <dbReference type="ChEBI" id="CHEBI:29035"/>
    </ligand>
</feature>
<feature type="binding site" evidence="1">
    <location>
        <position position="70"/>
    </location>
    <ligand>
        <name>Mn(2+)</name>
        <dbReference type="ChEBI" id="CHEBI:29035"/>
    </ligand>
</feature>
<feature type="binding site" evidence="1">
    <location>
        <position position="88"/>
    </location>
    <ligand>
        <name>Mg(2+)</name>
        <dbReference type="ChEBI" id="CHEBI:18420"/>
    </ligand>
</feature>
<feature type="binding site" evidence="1">
    <location>
        <position position="117"/>
    </location>
    <ligand>
        <name>Mn(2+)</name>
        <dbReference type="ChEBI" id="CHEBI:29035"/>
    </ligand>
</feature>
<feature type="binding site" evidence="1">
    <location>
        <position position="119"/>
    </location>
    <ligand>
        <name>Mn(2+)</name>
        <dbReference type="ChEBI" id="CHEBI:29035"/>
    </ligand>
</feature>
<keyword id="KW-0963">Cytoplasm</keyword>
<keyword id="KW-0413">Isomerase</keyword>
<keyword id="KW-0414">Isoprene biosynthesis</keyword>
<keyword id="KW-0460">Magnesium</keyword>
<keyword id="KW-0464">Manganese</keyword>
<keyword id="KW-0479">Metal-binding</keyword>